<organism>
    <name type="scientific">Thermococcus kodakarensis (strain ATCC BAA-918 / JCM 12380 / KOD1)</name>
    <name type="common">Pyrococcus kodakaraensis (strain KOD1)</name>
    <dbReference type="NCBI Taxonomy" id="69014"/>
    <lineage>
        <taxon>Archaea</taxon>
        <taxon>Methanobacteriati</taxon>
        <taxon>Methanobacteriota</taxon>
        <taxon>Thermococci</taxon>
        <taxon>Thermococcales</taxon>
        <taxon>Thermococcaceae</taxon>
        <taxon>Thermococcus</taxon>
    </lineage>
</organism>
<comment type="function">
    <text evidence="1">Stabilizes TBP binding to an archaeal box-A promoter. Also responsible for recruiting RNA polymerase II to the pre-initiation complex (DNA-TBP-TFIIB).</text>
</comment>
<comment type="similarity">
    <text evidence="1">Belongs to the TFIIB family.</text>
</comment>
<dbReference type="EMBL" id="AP006878">
    <property type="protein sequence ID" value="BAD85469.1"/>
    <property type="molecule type" value="Genomic_DNA"/>
</dbReference>
<dbReference type="RefSeq" id="WP_011250231.1">
    <property type="nucleotide sequence ID" value="NC_006624.1"/>
</dbReference>
<dbReference type="SMR" id="Q5JGN1"/>
<dbReference type="FunCoup" id="Q5JGN1">
    <property type="interactions" value="2"/>
</dbReference>
<dbReference type="STRING" id="69014.TK1280"/>
<dbReference type="EnsemblBacteria" id="BAD85469">
    <property type="protein sequence ID" value="BAD85469"/>
    <property type="gene ID" value="TK1280"/>
</dbReference>
<dbReference type="GeneID" id="78447797"/>
<dbReference type="KEGG" id="tko:TK1280"/>
<dbReference type="PATRIC" id="fig|69014.16.peg.1252"/>
<dbReference type="eggNOG" id="arCOG01981">
    <property type="taxonomic scope" value="Archaea"/>
</dbReference>
<dbReference type="HOGENOM" id="CLU_043736_0_1_2"/>
<dbReference type="InParanoid" id="Q5JGN1"/>
<dbReference type="OrthoDB" id="7429at2157"/>
<dbReference type="PhylomeDB" id="Q5JGN1"/>
<dbReference type="Proteomes" id="UP000000536">
    <property type="component" value="Chromosome"/>
</dbReference>
<dbReference type="GO" id="GO:0097550">
    <property type="term" value="C:transcription preinitiation complex"/>
    <property type="evidence" value="ECO:0000318"/>
    <property type="project" value="GO_Central"/>
</dbReference>
<dbReference type="GO" id="GO:0003700">
    <property type="term" value="F:DNA-binding transcription factor activity"/>
    <property type="evidence" value="ECO:0007669"/>
    <property type="project" value="UniProtKB-UniRule"/>
</dbReference>
<dbReference type="GO" id="GO:0017025">
    <property type="term" value="F:TBP-class protein binding"/>
    <property type="evidence" value="ECO:0007669"/>
    <property type="project" value="InterPro"/>
</dbReference>
<dbReference type="GO" id="GO:0008270">
    <property type="term" value="F:zinc ion binding"/>
    <property type="evidence" value="ECO:0007669"/>
    <property type="project" value="UniProtKB-UniRule"/>
</dbReference>
<dbReference type="GO" id="GO:0006352">
    <property type="term" value="P:DNA-templated transcription initiation"/>
    <property type="evidence" value="ECO:0000318"/>
    <property type="project" value="GO_Central"/>
</dbReference>
<dbReference type="GO" id="GO:0070897">
    <property type="term" value="P:transcription preinitiation complex assembly"/>
    <property type="evidence" value="ECO:0007669"/>
    <property type="project" value="InterPro"/>
</dbReference>
<dbReference type="CDD" id="cd20549">
    <property type="entry name" value="CYCLIN_TFIIB_archaea_like_rpt1"/>
    <property type="match status" value="1"/>
</dbReference>
<dbReference type="CDD" id="cd20550">
    <property type="entry name" value="CYCLIN_TFIIB_archaea_like_rpt2"/>
    <property type="match status" value="1"/>
</dbReference>
<dbReference type="FunFam" id="1.10.472.10:FF:000023">
    <property type="entry name" value="Transcription initiation factor IIB"/>
    <property type="match status" value="1"/>
</dbReference>
<dbReference type="FunFam" id="1.10.472.170:FF:000001">
    <property type="entry name" value="Transcription initiation factor IIB"/>
    <property type="match status" value="1"/>
</dbReference>
<dbReference type="Gene3D" id="1.10.472.170">
    <property type="match status" value="1"/>
</dbReference>
<dbReference type="Gene3D" id="1.10.472.10">
    <property type="entry name" value="Cyclin-like"/>
    <property type="match status" value="1"/>
</dbReference>
<dbReference type="HAMAP" id="MF_00383">
    <property type="entry name" value="TF2B_arch"/>
    <property type="match status" value="1"/>
</dbReference>
<dbReference type="InterPro" id="IPR013763">
    <property type="entry name" value="Cyclin-like_dom"/>
</dbReference>
<dbReference type="InterPro" id="IPR036915">
    <property type="entry name" value="Cyclin-like_sf"/>
</dbReference>
<dbReference type="InterPro" id="IPR000812">
    <property type="entry name" value="TFIIB"/>
</dbReference>
<dbReference type="InterPro" id="IPR023484">
    <property type="entry name" value="TFIIB_arc"/>
</dbReference>
<dbReference type="InterPro" id="IPR023486">
    <property type="entry name" value="TFIIB_CS"/>
</dbReference>
<dbReference type="InterPro" id="IPR013150">
    <property type="entry name" value="TFIIB_cyclin"/>
</dbReference>
<dbReference type="InterPro" id="IPR013137">
    <property type="entry name" value="Znf_TFIIB"/>
</dbReference>
<dbReference type="NCBIfam" id="NF001658">
    <property type="entry name" value="PRK00423.1"/>
    <property type="match status" value="1"/>
</dbReference>
<dbReference type="PANTHER" id="PTHR11618:SF13">
    <property type="entry name" value="TRANSCRIPTION INITIATION FACTOR IIB"/>
    <property type="match status" value="1"/>
</dbReference>
<dbReference type="PANTHER" id="PTHR11618">
    <property type="entry name" value="TRANSCRIPTION INITIATION FACTOR IIB-RELATED"/>
    <property type="match status" value="1"/>
</dbReference>
<dbReference type="Pfam" id="PF00382">
    <property type="entry name" value="TFIIB"/>
    <property type="match status" value="2"/>
</dbReference>
<dbReference type="Pfam" id="PF08271">
    <property type="entry name" value="Zn_Ribbon_TF"/>
    <property type="match status" value="1"/>
</dbReference>
<dbReference type="PRINTS" id="PR00685">
    <property type="entry name" value="TIFACTORIIB"/>
</dbReference>
<dbReference type="SMART" id="SM00385">
    <property type="entry name" value="CYCLIN"/>
    <property type="match status" value="2"/>
</dbReference>
<dbReference type="SUPFAM" id="SSF47954">
    <property type="entry name" value="Cyclin-like"/>
    <property type="match status" value="2"/>
</dbReference>
<dbReference type="SUPFAM" id="SSF57783">
    <property type="entry name" value="Zinc beta-ribbon"/>
    <property type="match status" value="1"/>
</dbReference>
<dbReference type="PROSITE" id="PS00782">
    <property type="entry name" value="TFIIB"/>
    <property type="match status" value="2"/>
</dbReference>
<dbReference type="PROSITE" id="PS51134">
    <property type="entry name" value="ZF_TFIIB"/>
    <property type="match status" value="1"/>
</dbReference>
<reference key="1">
    <citation type="journal article" date="2005" name="Genome Res.">
        <title>Complete genome sequence of the hyperthermophilic archaeon Thermococcus kodakaraensis KOD1 and comparison with Pyrococcus genomes.</title>
        <authorList>
            <person name="Fukui T."/>
            <person name="Atomi H."/>
            <person name="Kanai T."/>
            <person name="Matsumi R."/>
            <person name="Fujiwara S."/>
            <person name="Imanaka T."/>
        </authorList>
    </citation>
    <scope>NUCLEOTIDE SEQUENCE [LARGE SCALE GENOMIC DNA]</scope>
    <source>
        <strain>ATCC BAA-918 / JCM 12380 / KOD1</strain>
    </source>
</reference>
<evidence type="ECO:0000255" key="1">
    <source>
        <dbReference type="HAMAP-Rule" id="MF_00383"/>
    </source>
</evidence>
<evidence type="ECO:0000255" key="2">
    <source>
        <dbReference type="PROSITE-ProRule" id="PRU00469"/>
    </source>
</evidence>
<proteinExistence type="inferred from homology"/>
<sequence length="300" mass="33857">MSGKRVCPVCGSTEFIYDPSRGEIVCKVCGYVIEENVVDEGPEWRAFDPGQREKRARVGAPESILLHDKGLSTDIGIDRSLTGLMREKMYRLRKWQSRLRVSDAAERNLAFALSELDRLASNLSLPKHVEEEAARLYREAVRKGLIRGRSIEAVIAACVYAACRLLKVPRTLDEIADVSRVDKKEIGRSFRFIARHLNLTPKKLFVKPTDYVNKFADELGLSEKVRRRAIEILEEAYQRGLTSGKSPAGLVAAALYIASLMEGEKRTQREVAEVARVTEVTVRNRYKELVEKLNLKVPIA</sequence>
<feature type="chain" id="PRO_0000119329" description="Transcription initiation factor IIB 1">
    <location>
        <begin position="1"/>
        <end position="300"/>
    </location>
</feature>
<feature type="repeat" description="1">
    <location>
        <begin position="114"/>
        <end position="197"/>
    </location>
</feature>
<feature type="repeat" description="2">
    <location>
        <begin position="210"/>
        <end position="291"/>
    </location>
</feature>
<feature type="zinc finger region" description="TFIIB-type" evidence="2">
    <location>
        <begin position="3"/>
        <end position="34"/>
    </location>
</feature>
<feature type="binding site" evidence="2">
    <location>
        <position position="7"/>
    </location>
    <ligand>
        <name>Zn(2+)</name>
        <dbReference type="ChEBI" id="CHEBI:29105"/>
    </ligand>
</feature>
<feature type="binding site" evidence="2">
    <location>
        <position position="10"/>
    </location>
    <ligand>
        <name>Zn(2+)</name>
        <dbReference type="ChEBI" id="CHEBI:29105"/>
    </ligand>
</feature>
<feature type="binding site" evidence="2">
    <location>
        <position position="26"/>
    </location>
    <ligand>
        <name>Zn(2+)</name>
        <dbReference type="ChEBI" id="CHEBI:29105"/>
    </ligand>
</feature>
<feature type="binding site" evidence="2">
    <location>
        <position position="29"/>
    </location>
    <ligand>
        <name>Zn(2+)</name>
        <dbReference type="ChEBI" id="CHEBI:29105"/>
    </ligand>
</feature>
<gene>
    <name evidence="1" type="primary">tfb1</name>
    <name type="ordered locus">TK1280</name>
</gene>
<accession>Q5JGN1</accession>
<protein>
    <recommendedName>
        <fullName evidence="1">Transcription initiation factor IIB 1</fullName>
        <shortName evidence="1">TFIIB 1</shortName>
    </recommendedName>
</protein>
<keyword id="KW-0479">Metal-binding</keyword>
<keyword id="KW-1185">Reference proteome</keyword>
<keyword id="KW-0677">Repeat</keyword>
<keyword id="KW-0804">Transcription</keyword>
<keyword id="KW-0805">Transcription regulation</keyword>
<keyword id="KW-0862">Zinc</keyword>
<keyword id="KW-0863">Zinc-finger</keyword>
<name>TF2B1_THEKO</name>